<accession>B2U2P9</accession>
<comment type="function">
    <text evidence="1">Involved in the biosynthesis of the chorismate, which leads to the biosynthesis of aromatic amino acids. Catalyzes the reversible NADPH linked reduction of 3-dehydroshikimate (DHSA) to yield shikimate (SA).</text>
</comment>
<comment type="catalytic activity">
    <reaction evidence="1">
        <text>shikimate + NADP(+) = 3-dehydroshikimate + NADPH + H(+)</text>
        <dbReference type="Rhea" id="RHEA:17737"/>
        <dbReference type="ChEBI" id="CHEBI:15378"/>
        <dbReference type="ChEBI" id="CHEBI:16630"/>
        <dbReference type="ChEBI" id="CHEBI:36208"/>
        <dbReference type="ChEBI" id="CHEBI:57783"/>
        <dbReference type="ChEBI" id="CHEBI:58349"/>
        <dbReference type="EC" id="1.1.1.25"/>
    </reaction>
</comment>
<comment type="pathway">
    <text evidence="1">Metabolic intermediate biosynthesis; chorismate biosynthesis; chorismate from D-erythrose 4-phosphate and phosphoenolpyruvate: step 4/7.</text>
</comment>
<comment type="subunit">
    <text evidence="1">Homodimer.</text>
</comment>
<comment type="similarity">
    <text evidence="1">Belongs to the shikimate dehydrogenase family.</text>
</comment>
<organism>
    <name type="scientific">Shigella boydii serotype 18 (strain CDC 3083-94 / BS512)</name>
    <dbReference type="NCBI Taxonomy" id="344609"/>
    <lineage>
        <taxon>Bacteria</taxon>
        <taxon>Pseudomonadati</taxon>
        <taxon>Pseudomonadota</taxon>
        <taxon>Gammaproteobacteria</taxon>
        <taxon>Enterobacterales</taxon>
        <taxon>Enterobacteriaceae</taxon>
        <taxon>Shigella</taxon>
    </lineage>
</organism>
<keyword id="KW-0028">Amino-acid biosynthesis</keyword>
<keyword id="KW-0057">Aromatic amino acid biosynthesis</keyword>
<keyword id="KW-0521">NADP</keyword>
<keyword id="KW-0560">Oxidoreductase</keyword>
<keyword id="KW-1185">Reference proteome</keyword>
<proteinExistence type="inferred from homology"/>
<feature type="chain" id="PRO_1000100141" description="Shikimate dehydrogenase (NADP(+))">
    <location>
        <begin position="1"/>
        <end position="272"/>
    </location>
</feature>
<feature type="active site" description="Proton acceptor" evidence="1">
    <location>
        <position position="65"/>
    </location>
</feature>
<feature type="binding site" evidence="1">
    <location>
        <begin position="14"/>
        <end position="16"/>
    </location>
    <ligand>
        <name>shikimate</name>
        <dbReference type="ChEBI" id="CHEBI:36208"/>
    </ligand>
</feature>
<feature type="binding site" evidence="1">
    <location>
        <position position="61"/>
    </location>
    <ligand>
        <name>shikimate</name>
        <dbReference type="ChEBI" id="CHEBI:36208"/>
    </ligand>
</feature>
<feature type="binding site" evidence="1">
    <location>
        <position position="77"/>
    </location>
    <ligand>
        <name>NADP(+)</name>
        <dbReference type="ChEBI" id="CHEBI:58349"/>
    </ligand>
</feature>
<feature type="binding site" evidence="1">
    <location>
        <position position="86"/>
    </location>
    <ligand>
        <name>shikimate</name>
        <dbReference type="ChEBI" id="CHEBI:36208"/>
    </ligand>
</feature>
<feature type="binding site" evidence="1">
    <location>
        <position position="102"/>
    </location>
    <ligand>
        <name>shikimate</name>
        <dbReference type="ChEBI" id="CHEBI:36208"/>
    </ligand>
</feature>
<feature type="binding site" evidence="1">
    <location>
        <begin position="126"/>
        <end position="130"/>
    </location>
    <ligand>
        <name>NADP(+)</name>
        <dbReference type="ChEBI" id="CHEBI:58349"/>
    </ligand>
</feature>
<feature type="binding site" evidence="1">
    <location>
        <begin position="149"/>
        <end position="154"/>
    </location>
    <ligand>
        <name>NADP(+)</name>
        <dbReference type="ChEBI" id="CHEBI:58349"/>
    </ligand>
</feature>
<feature type="binding site" evidence="1">
    <location>
        <position position="213"/>
    </location>
    <ligand>
        <name>NADP(+)</name>
        <dbReference type="ChEBI" id="CHEBI:58349"/>
    </ligand>
</feature>
<feature type="binding site" evidence="1">
    <location>
        <position position="215"/>
    </location>
    <ligand>
        <name>shikimate</name>
        <dbReference type="ChEBI" id="CHEBI:36208"/>
    </ligand>
</feature>
<feature type="binding site" evidence="1">
    <location>
        <position position="237"/>
    </location>
    <ligand>
        <name>NADP(+)</name>
        <dbReference type="ChEBI" id="CHEBI:58349"/>
    </ligand>
</feature>
<protein>
    <recommendedName>
        <fullName evidence="1">Shikimate dehydrogenase (NADP(+))</fullName>
        <shortName evidence="1">SDH</shortName>
        <ecNumber evidence="1">1.1.1.25</ecNumber>
    </recommendedName>
</protein>
<reference key="1">
    <citation type="submission" date="2008-05" db="EMBL/GenBank/DDBJ databases">
        <title>Complete sequence of Shigella boydii serotype 18 strain BS512.</title>
        <authorList>
            <person name="Rasko D.A."/>
            <person name="Rosovitz M."/>
            <person name="Maurelli A.T."/>
            <person name="Myers G."/>
            <person name="Seshadri R."/>
            <person name="Cer R."/>
            <person name="Jiang L."/>
            <person name="Ravel J."/>
            <person name="Sebastian Y."/>
        </authorList>
    </citation>
    <scope>NUCLEOTIDE SEQUENCE [LARGE SCALE GENOMIC DNA]</scope>
    <source>
        <strain>CDC 3083-94 / BS512</strain>
    </source>
</reference>
<dbReference type="EC" id="1.1.1.25" evidence="1"/>
<dbReference type="EMBL" id="CP001063">
    <property type="protein sequence ID" value="ACD10316.1"/>
    <property type="molecule type" value="Genomic_DNA"/>
</dbReference>
<dbReference type="RefSeq" id="WP_000451237.1">
    <property type="nucleotide sequence ID" value="NC_010658.1"/>
</dbReference>
<dbReference type="SMR" id="B2U2P9"/>
<dbReference type="STRING" id="344609.SbBS512_E3666"/>
<dbReference type="KEGG" id="sbc:SbBS512_E3666"/>
<dbReference type="HOGENOM" id="CLU_044063_2_1_6"/>
<dbReference type="UniPathway" id="UPA00053">
    <property type="reaction ID" value="UER00087"/>
</dbReference>
<dbReference type="Proteomes" id="UP000001030">
    <property type="component" value="Chromosome"/>
</dbReference>
<dbReference type="GO" id="GO:0005829">
    <property type="term" value="C:cytosol"/>
    <property type="evidence" value="ECO:0007669"/>
    <property type="project" value="TreeGrafter"/>
</dbReference>
<dbReference type="GO" id="GO:0050661">
    <property type="term" value="F:NADP binding"/>
    <property type="evidence" value="ECO:0007669"/>
    <property type="project" value="InterPro"/>
</dbReference>
<dbReference type="GO" id="GO:0004764">
    <property type="term" value="F:shikimate 3-dehydrogenase (NADP+) activity"/>
    <property type="evidence" value="ECO:0007669"/>
    <property type="project" value="UniProtKB-UniRule"/>
</dbReference>
<dbReference type="GO" id="GO:0008652">
    <property type="term" value="P:amino acid biosynthetic process"/>
    <property type="evidence" value="ECO:0007669"/>
    <property type="project" value="UniProtKB-KW"/>
</dbReference>
<dbReference type="GO" id="GO:0009073">
    <property type="term" value="P:aromatic amino acid family biosynthetic process"/>
    <property type="evidence" value="ECO:0007669"/>
    <property type="project" value="UniProtKB-KW"/>
</dbReference>
<dbReference type="GO" id="GO:0009423">
    <property type="term" value="P:chorismate biosynthetic process"/>
    <property type="evidence" value="ECO:0007669"/>
    <property type="project" value="UniProtKB-UniRule"/>
</dbReference>
<dbReference type="GO" id="GO:0019632">
    <property type="term" value="P:shikimate metabolic process"/>
    <property type="evidence" value="ECO:0007669"/>
    <property type="project" value="InterPro"/>
</dbReference>
<dbReference type="CDD" id="cd01065">
    <property type="entry name" value="NAD_bind_Shikimate_DH"/>
    <property type="match status" value="1"/>
</dbReference>
<dbReference type="FunFam" id="3.40.50.10860:FF:000006">
    <property type="entry name" value="Shikimate dehydrogenase (NADP(+))"/>
    <property type="match status" value="1"/>
</dbReference>
<dbReference type="FunFam" id="3.40.50.720:FF:000104">
    <property type="entry name" value="Shikimate dehydrogenase (NADP(+))"/>
    <property type="match status" value="1"/>
</dbReference>
<dbReference type="Gene3D" id="3.40.50.10860">
    <property type="entry name" value="Leucine Dehydrogenase, chain A, domain 1"/>
    <property type="match status" value="1"/>
</dbReference>
<dbReference type="Gene3D" id="3.40.50.720">
    <property type="entry name" value="NAD(P)-binding Rossmann-like Domain"/>
    <property type="match status" value="1"/>
</dbReference>
<dbReference type="HAMAP" id="MF_00222">
    <property type="entry name" value="Shikimate_DH_AroE"/>
    <property type="match status" value="1"/>
</dbReference>
<dbReference type="InterPro" id="IPR046346">
    <property type="entry name" value="Aminoacid_DH-like_N_sf"/>
</dbReference>
<dbReference type="InterPro" id="IPR036291">
    <property type="entry name" value="NAD(P)-bd_dom_sf"/>
</dbReference>
<dbReference type="InterPro" id="IPR041121">
    <property type="entry name" value="SDH_C"/>
</dbReference>
<dbReference type="InterPro" id="IPR011342">
    <property type="entry name" value="Shikimate_DH"/>
</dbReference>
<dbReference type="InterPro" id="IPR013708">
    <property type="entry name" value="Shikimate_DH-bd_N"/>
</dbReference>
<dbReference type="InterPro" id="IPR022893">
    <property type="entry name" value="Shikimate_DH_fam"/>
</dbReference>
<dbReference type="InterPro" id="IPR006151">
    <property type="entry name" value="Shikm_DH/Glu-tRNA_Rdtase"/>
</dbReference>
<dbReference type="NCBIfam" id="TIGR00507">
    <property type="entry name" value="aroE"/>
    <property type="match status" value="1"/>
</dbReference>
<dbReference type="NCBIfam" id="NF001310">
    <property type="entry name" value="PRK00258.1-2"/>
    <property type="match status" value="1"/>
</dbReference>
<dbReference type="PANTHER" id="PTHR21089:SF1">
    <property type="entry name" value="BIFUNCTIONAL 3-DEHYDROQUINATE DEHYDRATASE_SHIKIMATE DEHYDROGENASE, CHLOROPLASTIC"/>
    <property type="match status" value="1"/>
</dbReference>
<dbReference type="PANTHER" id="PTHR21089">
    <property type="entry name" value="SHIKIMATE DEHYDROGENASE"/>
    <property type="match status" value="1"/>
</dbReference>
<dbReference type="Pfam" id="PF18317">
    <property type="entry name" value="SDH_C"/>
    <property type="match status" value="1"/>
</dbReference>
<dbReference type="Pfam" id="PF01488">
    <property type="entry name" value="Shikimate_DH"/>
    <property type="match status" value="1"/>
</dbReference>
<dbReference type="Pfam" id="PF08501">
    <property type="entry name" value="Shikimate_dh_N"/>
    <property type="match status" value="1"/>
</dbReference>
<dbReference type="SUPFAM" id="SSF53223">
    <property type="entry name" value="Aminoacid dehydrogenase-like, N-terminal domain"/>
    <property type="match status" value="1"/>
</dbReference>
<dbReference type="SUPFAM" id="SSF51735">
    <property type="entry name" value="NAD(P)-binding Rossmann-fold domains"/>
    <property type="match status" value="1"/>
</dbReference>
<gene>
    <name evidence="1" type="primary">aroE</name>
    <name type="ordered locus">SbBS512_E3666</name>
</gene>
<evidence type="ECO:0000255" key="1">
    <source>
        <dbReference type="HAMAP-Rule" id="MF_00222"/>
    </source>
</evidence>
<name>AROE_SHIB3</name>
<sequence length="272" mass="29454">METYAVFGNPIAHSKSPFIHQQFAQQLNIEHPYGRVLAPINDFINTLNAFFSAGGKGANVTVPFKEEAFARADELTERAALAGAVNTLKRLEDGRLQGDNTDGIGLLSDLERLSFIRPGLRILLIGAGGASRGVLLPLLSLDCAVTITNRTVSRAEELAKLFAHTGSIQALGMDELEGHEFDLIINATSSGISGDIPAIPSSLIHLGIYCYDMFYQKGKTPFLAWCEQRGSKRNVDGLGMLVAQAAHAFLLWHGVLPDVEPVIKQLQEELSA</sequence>